<feature type="chain" id="PRO_0000224898" description="Holliday junction branch migration complex subunit RuvA">
    <location>
        <begin position="1"/>
        <end position="207"/>
    </location>
</feature>
<feature type="region of interest" description="Domain I" evidence="1">
    <location>
        <begin position="1"/>
        <end position="64"/>
    </location>
</feature>
<feature type="region of interest" description="Domain II" evidence="1">
    <location>
        <begin position="65"/>
        <end position="143"/>
    </location>
</feature>
<feature type="region of interest" description="Flexible linker" evidence="1">
    <location>
        <begin position="144"/>
        <end position="152"/>
    </location>
</feature>
<feature type="region of interest" description="Domain III" evidence="1">
    <location>
        <begin position="153"/>
        <end position="207"/>
    </location>
</feature>
<protein>
    <recommendedName>
        <fullName evidence="1">Holliday junction branch migration complex subunit RuvA</fullName>
    </recommendedName>
</protein>
<keyword id="KW-0963">Cytoplasm</keyword>
<keyword id="KW-0227">DNA damage</keyword>
<keyword id="KW-0233">DNA recombination</keyword>
<keyword id="KW-0234">DNA repair</keyword>
<keyword id="KW-0238">DNA-binding</keyword>
<keyword id="KW-1185">Reference proteome</keyword>
<accession>Q4FTU0</accession>
<name>RUVA_PSYA2</name>
<evidence type="ECO:0000255" key="1">
    <source>
        <dbReference type="HAMAP-Rule" id="MF_00031"/>
    </source>
</evidence>
<reference key="1">
    <citation type="journal article" date="2010" name="Appl. Environ. Microbiol.">
        <title>The genome sequence of Psychrobacter arcticus 273-4, a psychroactive Siberian permafrost bacterium, reveals mechanisms for adaptation to low-temperature growth.</title>
        <authorList>
            <person name="Ayala-del-Rio H.L."/>
            <person name="Chain P.S."/>
            <person name="Grzymski J.J."/>
            <person name="Ponder M.A."/>
            <person name="Ivanova N."/>
            <person name="Bergholz P.W."/>
            <person name="Di Bartolo G."/>
            <person name="Hauser L."/>
            <person name="Land M."/>
            <person name="Bakermans C."/>
            <person name="Rodrigues D."/>
            <person name="Klappenbach J."/>
            <person name="Zarka D."/>
            <person name="Larimer F."/>
            <person name="Richardson P."/>
            <person name="Murray A."/>
            <person name="Thomashow M."/>
            <person name="Tiedje J.M."/>
        </authorList>
    </citation>
    <scope>NUCLEOTIDE SEQUENCE [LARGE SCALE GENOMIC DNA]</scope>
    <source>
        <strain>DSM 17307 / VKM B-2377 / 273-4</strain>
    </source>
</reference>
<organism>
    <name type="scientific">Psychrobacter arcticus (strain DSM 17307 / VKM B-2377 / 273-4)</name>
    <dbReference type="NCBI Taxonomy" id="259536"/>
    <lineage>
        <taxon>Bacteria</taxon>
        <taxon>Pseudomonadati</taxon>
        <taxon>Pseudomonadota</taxon>
        <taxon>Gammaproteobacteria</taxon>
        <taxon>Moraxellales</taxon>
        <taxon>Moraxellaceae</taxon>
        <taxon>Psychrobacter</taxon>
    </lineage>
</organism>
<proteinExistence type="inferred from homology"/>
<gene>
    <name evidence="1" type="primary">ruvA</name>
    <name type="ordered locus">Psyc_0709</name>
</gene>
<dbReference type="EMBL" id="CP000082">
    <property type="protein sequence ID" value="AAZ18568.1"/>
    <property type="molecule type" value="Genomic_DNA"/>
</dbReference>
<dbReference type="RefSeq" id="WP_011279995.1">
    <property type="nucleotide sequence ID" value="NC_007204.1"/>
</dbReference>
<dbReference type="SMR" id="Q4FTU0"/>
<dbReference type="STRING" id="259536.Psyc_0709"/>
<dbReference type="KEGG" id="par:Psyc_0709"/>
<dbReference type="eggNOG" id="COG0632">
    <property type="taxonomic scope" value="Bacteria"/>
</dbReference>
<dbReference type="HOGENOM" id="CLU_087936_0_0_6"/>
<dbReference type="OrthoDB" id="5293449at2"/>
<dbReference type="Proteomes" id="UP000000546">
    <property type="component" value="Chromosome"/>
</dbReference>
<dbReference type="GO" id="GO:0005737">
    <property type="term" value="C:cytoplasm"/>
    <property type="evidence" value="ECO:0007669"/>
    <property type="project" value="UniProtKB-SubCell"/>
</dbReference>
<dbReference type="GO" id="GO:0009379">
    <property type="term" value="C:Holliday junction helicase complex"/>
    <property type="evidence" value="ECO:0007669"/>
    <property type="project" value="InterPro"/>
</dbReference>
<dbReference type="GO" id="GO:0048476">
    <property type="term" value="C:Holliday junction resolvase complex"/>
    <property type="evidence" value="ECO:0007669"/>
    <property type="project" value="UniProtKB-UniRule"/>
</dbReference>
<dbReference type="GO" id="GO:0005524">
    <property type="term" value="F:ATP binding"/>
    <property type="evidence" value="ECO:0007669"/>
    <property type="project" value="InterPro"/>
</dbReference>
<dbReference type="GO" id="GO:0000400">
    <property type="term" value="F:four-way junction DNA binding"/>
    <property type="evidence" value="ECO:0007669"/>
    <property type="project" value="UniProtKB-UniRule"/>
</dbReference>
<dbReference type="GO" id="GO:0009378">
    <property type="term" value="F:four-way junction helicase activity"/>
    <property type="evidence" value="ECO:0007669"/>
    <property type="project" value="InterPro"/>
</dbReference>
<dbReference type="GO" id="GO:0006310">
    <property type="term" value="P:DNA recombination"/>
    <property type="evidence" value="ECO:0007669"/>
    <property type="project" value="UniProtKB-UniRule"/>
</dbReference>
<dbReference type="GO" id="GO:0006281">
    <property type="term" value="P:DNA repair"/>
    <property type="evidence" value="ECO:0007669"/>
    <property type="project" value="UniProtKB-UniRule"/>
</dbReference>
<dbReference type="CDD" id="cd14332">
    <property type="entry name" value="UBA_RuvA_C"/>
    <property type="match status" value="1"/>
</dbReference>
<dbReference type="Gene3D" id="1.10.150.20">
    <property type="entry name" value="5' to 3' exonuclease, C-terminal subdomain"/>
    <property type="match status" value="1"/>
</dbReference>
<dbReference type="Gene3D" id="1.10.8.10">
    <property type="entry name" value="DNA helicase RuvA subunit, C-terminal domain"/>
    <property type="match status" value="1"/>
</dbReference>
<dbReference type="Gene3D" id="2.40.50.140">
    <property type="entry name" value="Nucleic acid-binding proteins"/>
    <property type="match status" value="1"/>
</dbReference>
<dbReference type="HAMAP" id="MF_00031">
    <property type="entry name" value="DNA_HJ_migration_RuvA"/>
    <property type="match status" value="1"/>
</dbReference>
<dbReference type="InterPro" id="IPR013849">
    <property type="entry name" value="DNA_helicase_Holl-junc_RuvA_I"/>
</dbReference>
<dbReference type="InterPro" id="IPR003583">
    <property type="entry name" value="Hlx-hairpin-Hlx_DNA-bd_motif"/>
</dbReference>
<dbReference type="InterPro" id="IPR012340">
    <property type="entry name" value="NA-bd_OB-fold"/>
</dbReference>
<dbReference type="InterPro" id="IPR000085">
    <property type="entry name" value="RuvA"/>
</dbReference>
<dbReference type="InterPro" id="IPR010994">
    <property type="entry name" value="RuvA_2-like"/>
</dbReference>
<dbReference type="InterPro" id="IPR011114">
    <property type="entry name" value="RuvA_C"/>
</dbReference>
<dbReference type="InterPro" id="IPR036267">
    <property type="entry name" value="RuvA_C_sf"/>
</dbReference>
<dbReference type="NCBIfam" id="TIGR00084">
    <property type="entry name" value="ruvA"/>
    <property type="match status" value="1"/>
</dbReference>
<dbReference type="Pfam" id="PF14520">
    <property type="entry name" value="HHH_5"/>
    <property type="match status" value="1"/>
</dbReference>
<dbReference type="Pfam" id="PF07499">
    <property type="entry name" value="RuvA_C"/>
    <property type="match status" value="1"/>
</dbReference>
<dbReference type="Pfam" id="PF01330">
    <property type="entry name" value="RuvA_N"/>
    <property type="match status" value="1"/>
</dbReference>
<dbReference type="SMART" id="SM00278">
    <property type="entry name" value="HhH1"/>
    <property type="match status" value="2"/>
</dbReference>
<dbReference type="SUPFAM" id="SSF46929">
    <property type="entry name" value="DNA helicase RuvA subunit, C-terminal domain"/>
    <property type="match status" value="1"/>
</dbReference>
<dbReference type="SUPFAM" id="SSF50249">
    <property type="entry name" value="Nucleic acid-binding proteins"/>
    <property type="match status" value="1"/>
</dbReference>
<dbReference type="SUPFAM" id="SSF47781">
    <property type="entry name" value="RuvA domain 2-like"/>
    <property type="match status" value="1"/>
</dbReference>
<comment type="function">
    <text evidence="1">The RuvA-RuvB-RuvC complex processes Holliday junction (HJ) DNA during genetic recombination and DNA repair, while the RuvA-RuvB complex plays an important role in the rescue of blocked DNA replication forks via replication fork reversal (RFR). RuvA specifically binds to HJ cruciform DNA, conferring on it an open structure. The RuvB hexamer acts as an ATP-dependent pump, pulling dsDNA into and through the RuvAB complex. HJ branch migration allows RuvC to scan DNA until it finds its consensus sequence, where it cleaves and resolves the cruciform DNA.</text>
</comment>
<comment type="subunit">
    <text evidence="1">Homotetramer. Forms an RuvA(8)-RuvB(12)-Holliday junction (HJ) complex. HJ DNA is sandwiched between 2 RuvA tetramers; dsDNA enters through RuvA and exits via RuvB. An RuvB hexamer assembles on each DNA strand where it exits the tetramer. Each RuvB hexamer is contacted by two RuvA subunits (via domain III) on 2 adjacent RuvB subunits; this complex drives branch migration. In the full resolvosome a probable DNA-RuvA(4)-RuvB(12)-RuvC(2) complex forms which resolves the HJ.</text>
</comment>
<comment type="subcellular location">
    <subcellularLocation>
        <location evidence="1">Cytoplasm</location>
    </subcellularLocation>
</comment>
<comment type="domain">
    <text evidence="1">Has three domains with a flexible linker between the domains II and III and assumes an 'L' shape. Domain III is highly mobile and contacts RuvB.</text>
</comment>
<comment type="similarity">
    <text evidence="1">Belongs to the RuvA family.</text>
</comment>
<sequence>MIGLISGQVQYLMAPTACVMTTSGIGYDIELPLPSFCQLRLNEQASIWTHFHVREDAQLLYGFIDRKERDVFRQLIKINGVGAKMALAMLSAMSAAELKMHVEQESETALTRIPGIGKKTAQRLLIELKDKLKNIEVDNSNLEFAIQPAPISAEDSIIAEVEGALMSLGYKEKEAQQAIKAAKSNGETFADTQSLLKATLQQFQSFK</sequence>